<keyword id="KW-0416">Keratin</keyword>
<keyword id="KW-1267">Proteomics identification</keyword>
<keyword id="KW-1185">Reference proteome</keyword>
<keyword id="KW-0677">Repeat</keyword>
<protein>
    <recommendedName>
        <fullName>Keratin-associated protein 5-8</fullName>
    </recommendedName>
    <alternativeName>
        <fullName>Keratin, ultra high-sulfur matrix protein B</fullName>
    </alternativeName>
    <alternativeName>
        <fullName>Keratin-associated protein 5.8</fullName>
    </alternativeName>
    <alternativeName>
        <fullName>UHS keratin B</fullName>
        <shortName>UHS KerB</shortName>
    </alternativeName>
    <alternativeName>
        <fullName>Ultrahigh sulfur keratin-associated protein 5.8</fullName>
    </alternativeName>
</protein>
<feature type="chain" id="PRO_0000184106" description="Keratin-associated protein 5-8">
    <location>
        <begin position="1"/>
        <end position="187"/>
    </location>
</feature>
<feature type="repeat" description="1">
    <location>
        <begin position="28"/>
        <end position="31"/>
    </location>
</feature>
<feature type="repeat" description="2">
    <location>
        <begin position="34"/>
        <end position="37"/>
    </location>
</feature>
<feature type="repeat" description="3">
    <location>
        <begin position="40"/>
        <end position="43"/>
    </location>
</feature>
<feature type="repeat" description="4">
    <location>
        <begin position="109"/>
        <end position="112"/>
    </location>
</feature>
<feature type="repeat" description="5">
    <location>
        <begin position="119"/>
        <end position="122"/>
    </location>
</feature>
<feature type="repeat" description="6">
    <location>
        <begin position="138"/>
        <end position="141"/>
    </location>
</feature>
<feature type="repeat" description="7">
    <location>
        <begin position="148"/>
        <end position="151"/>
    </location>
</feature>
<feature type="repeat" description="8">
    <location>
        <begin position="167"/>
        <end position="170"/>
    </location>
</feature>
<feature type="repeat" description="9">
    <location>
        <begin position="177"/>
        <end position="180"/>
    </location>
</feature>
<feature type="region of interest" description="9 X 4 AA repeats of C-C-X-P">
    <location>
        <begin position="28"/>
        <end position="180"/>
    </location>
</feature>
<feature type="sequence variant" id="VAR_062156" description="In dbSNP:rs55921335.">
    <original>C</original>
    <variation>R</variation>
    <location>
        <position position="28"/>
    </location>
</feature>
<feature type="sequence conflict" description="In Ref. 1; CAA07188." evidence="2" ref="1">
    <original>SC</original>
    <variation>GCGGCGSSR</variation>
    <location>
        <begin position="27"/>
        <end position="28"/>
    </location>
</feature>
<feature type="sequence conflict" description="In Ref. 3; AAQ62965." evidence="2" ref="3">
    <original>C</original>
    <variation>R</variation>
    <location>
        <position position="29"/>
    </location>
</feature>
<feature type="sequence conflict" description="In Ref. 3; AAQ62965." evidence="2" ref="3">
    <original>Y</original>
    <variation>C</variation>
    <location>
        <position position="91"/>
    </location>
</feature>
<dbReference type="EMBL" id="AJ006692">
    <property type="protein sequence ID" value="CAA07188.1"/>
    <property type="molecule type" value="Genomic_DNA"/>
</dbReference>
<dbReference type="EMBL" id="AB126077">
    <property type="protein sequence ID" value="BAD20204.1"/>
    <property type="molecule type" value="mRNA"/>
</dbReference>
<dbReference type="EMBL" id="AY360461">
    <property type="protein sequence ID" value="AAQ62965.1"/>
    <property type="molecule type" value="mRNA"/>
</dbReference>
<dbReference type="CCDS" id="CCDS41683.1"/>
<dbReference type="RefSeq" id="NP_066384.2">
    <property type="nucleotide sequence ID" value="NM_021046.3"/>
</dbReference>
<dbReference type="BioGRID" id="121789">
    <property type="interactions" value="7"/>
</dbReference>
<dbReference type="FunCoup" id="O75690">
    <property type="interactions" value="10"/>
</dbReference>
<dbReference type="IntAct" id="O75690">
    <property type="interactions" value="3"/>
</dbReference>
<dbReference type="STRING" id="9606.ENSP00000420723"/>
<dbReference type="iPTMnet" id="O75690"/>
<dbReference type="PhosphoSitePlus" id="O75690"/>
<dbReference type="BioMuta" id="KRTAP5-8"/>
<dbReference type="PaxDb" id="9606-ENSP00000420723"/>
<dbReference type="PeptideAtlas" id="O75690"/>
<dbReference type="Antibodypedia" id="77457">
    <property type="antibodies" value="1 antibodies from 1 providers"/>
</dbReference>
<dbReference type="DNASU" id="57830"/>
<dbReference type="Ensembl" id="ENST00000398534.4">
    <property type="protein sequence ID" value="ENSP00000420723.1"/>
    <property type="gene ID" value="ENSG00000241233.4"/>
</dbReference>
<dbReference type="GeneID" id="57830"/>
<dbReference type="KEGG" id="hsa:57830"/>
<dbReference type="MANE-Select" id="ENST00000398534.4">
    <property type="protein sequence ID" value="ENSP00000420723.1"/>
    <property type="RefSeq nucleotide sequence ID" value="NM_021046.3"/>
    <property type="RefSeq protein sequence ID" value="NP_066384.2"/>
</dbReference>
<dbReference type="UCSC" id="uc001oqr.1">
    <property type="organism name" value="human"/>
</dbReference>
<dbReference type="AGR" id="HGNC:23603"/>
<dbReference type="CTD" id="57830"/>
<dbReference type="GeneCards" id="KRTAP5-8"/>
<dbReference type="HGNC" id="HGNC:23603">
    <property type="gene designation" value="KRTAP5-8"/>
</dbReference>
<dbReference type="HPA" id="ENSG00000241233">
    <property type="expression patterns" value="Group enriched (kidney, skin)"/>
</dbReference>
<dbReference type="neXtProt" id="NX_O75690"/>
<dbReference type="OpenTargets" id="ENSG00000241233"/>
<dbReference type="PharmGKB" id="PA134954599"/>
<dbReference type="VEuPathDB" id="HostDB:ENSG00000241233"/>
<dbReference type="eggNOG" id="KOG4726">
    <property type="taxonomic scope" value="Eukaryota"/>
</dbReference>
<dbReference type="GeneTree" id="ENSGT00940000164776"/>
<dbReference type="HOGENOM" id="CLU_097966_0_0_1"/>
<dbReference type="InParanoid" id="O75690"/>
<dbReference type="OMA" id="PGGKCGP"/>
<dbReference type="PAN-GO" id="O75690">
    <property type="GO annotations" value="0 GO annotations based on evolutionary models"/>
</dbReference>
<dbReference type="PathwayCommons" id="O75690"/>
<dbReference type="Reactome" id="R-HSA-6805567">
    <property type="pathway name" value="Keratinization"/>
</dbReference>
<dbReference type="SignaLink" id="O75690"/>
<dbReference type="BioGRID-ORCS" id="57830">
    <property type="hits" value="150 hits in 1039 CRISPR screens"/>
</dbReference>
<dbReference type="GenomeRNAi" id="57830"/>
<dbReference type="Pharos" id="O75690">
    <property type="development level" value="Tdark"/>
</dbReference>
<dbReference type="PRO" id="PR:O75690"/>
<dbReference type="Proteomes" id="UP000005640">
    <property type="component" value="Chromosome 11"/>
</dbReference>
<dbReference type="RNAct" id="O75690">
    <property type="molecule type" value="protein"/>
</dbReference>
<dbReference type="Bgee" id="ENSG00000241233">
    <property type="expression patterns" value="Expressed in male germ line stem cell (sensu Vertebrata) in testis and 78 other cell types or tissues"/>
</dbReference>
<dbReference type="GO" id="GO:0005829">
    <property type="term" value="C:cytosol"/>
    <property type="evidence" value="ECO:0000304"/>
    <property type="project" value="Reactome"/>
</dbReference>
<dbReference type="GO" id="GO:0005882">
    <property type="term" value="C:intermediate filament"/>
    <property type="evidence" value="ECO:0007669"/>
    <property type="project" value="UniProtKB-KW"/>
</dbReference>
<dbReference type="GO" id="GO:0030280">
    <property type="term" value="F:structural constituent of skin epidermis"/>
    <property type="evidence" value="ECO:0000303"/>
    <property type="project" value="UniProtKB"/>
</dbReference>
<reference key="1">
    <citation type="journal article" date="1999" name="Gene">
        <title>Genomic organization and promoter characterization of two human UHS keratin genes.</title>
        <authorList>
            <person name="Perez C."/>
            <person name="Auriol J."/>
            <person name="Gerst C."/>
            <person name="Bernard B.A."/>
            <person name="Egly J.-M."/>
        </authorList>
    </citation>
    <scope>NUCLEOTIDE SEQUENCE [GENOMIC DNA]</scope>
</reference>
<reference key="2">
    <citation type="journal article" date="2004" name="Biochem. Biophys. Res. Commun.">
        <title>Identification of two novel clusters of ultrahigh-sulfur keratin-associated protein genes on human chromosome 11.</title>
        <authorList>
            <person name="Yahagi S."/>
            <person name="Shibuya K."/>
            <person name="Obayashi I."/>
            <person name="Masaki H."/>
            <person name="Kurata Y."/>
            <person name="Kudoh J."/>
            <person name="Shimizu N."/>
        </authorList>
    </citation>
    <scope>NUCLEOTIDE SEQUENCE [MRNA]</scope>
    <scope>TISSUE SPECIFICITY</scope>
    <source>
        <tissue>Hair root</tissue>
    </source>
</reference>
<reference key="3">
    <citation type="submission" date="2003-08" db="EMBL/GenBank/DDBJ databases">
        <authorList>
            <person name="Zhou G."/>
            <person name="Yu R."/>
            <person name="Li H."/>
            <person name="Shen C."/>
            <person name="Li M."/>
            <person name="Xiao W."/>
            <person name="Zhong G."/>
            <person name="Lin L."/>
            <person name="Yang S."/>
        </authorList>
    </citation>
    <scope>NUCLEOTIDE SEQUENCE [LARGE SCALE MRNA]</scope>
</reference>
<comment type="function">
    <text>In the hair cortex, hair keratin intermediate filaments are embedded in an interfilamentous matrix, consisting of hair keratin-associated protein (KRTAP), which are essential for the formation of a rigid and resistant hair shaft through their extensive disulfide bond cross-linking with abundant cysteine residues of hair keratins. The matrix proteins include the high-sulfur and high-glycine-tyrosine keratins.</text>
</comment>
<comment type="interaction">
    <interactant intactId="EBI-12134621">
        <id>O75690</id>
    </interactant>
    <interactant intactId="EBI-713677">
        <id>Q9UGL9</id>
        <label>CRCT1</label>
    </interactant>
    <organismsDiffer>false</organismsDiffer>
    <experiments>3</experiments>
</comment>
<comment type="interaction">
    <interactant intactId="EBI-12134621">
        <id>O75690</id>
    </interactant>
    <interactant intactId="EBI-747421">
        <id>Q03014</id>
        <label>HHEX</label>
    </interactant>
    <organismsDiffer>false</organismsDiffer>
    <experiments>3</experiments>
</comment>
<comment type="interaction">
    <interactant intactId="EBI-12134621">
        <id>O75690</id>
    </interactant>
    <interactant intactId="EBI-8058160">
        <id>O96014</id>
        <label>WNT11</label>
    </interactant>
    <organismsDiffer>false</organismsDiffer>
    <experiments>3</experiments>
</comment>
<comment type="tissue specificity">
    <text evidence="1">Restricted to hair root, not detected in any other tissues. Expressed in cuticle layers of differentiating hair follicles.</text>
</comment>
<comment type="similarity">
    <text evidence="2">Belongs to the KRTAP type 5 family.</text>
</comment>
<proteinExistence type="evidence at protein level"/>
<accession>O75690</accession>
<accession>Q6L8G7</accession>
<accession>Q6UTX6</accession>
<gene>
    <name type="primary">KRTAP5-8</name>
    <name type="synonym">KAP5.8</name>
    <name type="synonym">KRTAP5.8</name>
    <name type="synonym">UHSKB</name>
</gene>
<organism>
    <name type="scientific">Homo sapiens</name>
    <name type="common">Human</name>
    <dbReference type="NCBI Taxonomy" id="9606"/>
    <lineage>
        <taxon>Eukaryota</taxon>
        <taxon>Metazoa</taxon>
        <taxon>Chordata</taxon>
        <taxon>Craniata</taxon>
        <taxon>Vertebrata</taxon>
        <taxon>Euteleostomi</taxon>
        <taxon>Mammalia</taxon>
        <taxon>Eutheria</taxon>
        <taxon>Euarchontoglires</taxon>
        <taxon>Primates</taxon>
        <taxon>Haplorrhini</taxon>
        <taxon>Catarrhini</taxon>
        <taxon>Hominidae</taxon>
        <taxon>Homo</taxon>
    </lineage>
</organism>
<evidence type="ECO:0000269" key="1">
    <source>
    </source>
</evidence>
<evidence type="ECO:0000305" key="2"/>
<name>KRA58_HUMAN</name>
<sequence>MGCCGCSGGCGSGCGGCGSGCGGCGSSCCVPICCCKPVCCCVPACSCSSCGSCGGSKGGRGSCGGSKGDCGSCGGSKGGCGSCGCSQCSCYKPCCCSSGCGSSCCQSSCCKPCCSQSSCCKPCSCSSGCGSSCCQSSCCKPCCSQSSCCKPCCCSSGCGSSCCQSSCCKPCCSQSSCCVPICCQCKI</sequence>